<feature type="chain" id="PRO_1000072709" description="Ribosomal RNA large subunit methyltransferase H">
    <location>
        <begin position="1"/>
        <end position="159"/>
    </location>
</feature>
<feature type="binding site" evidence="1">
    <location>
        <position position="76"/>
    </location>
    <ligand>
        <name>S-adenosyl-L-methionine</name>
        <dbReference type="ChEBI" id="CHEBI:59789"/>
    </ligand>
</feature>
<feature type="binding site" evidence="1">
    <location>
        <position position="108"/>
    </location>
    <ligand>
        <name>S-adenosyl-L-methionine</name>
        <dbReference type="ChEBI" id="CHEBI:59789"/>
    </ligand>
</feature>
<feature type="binding site" evidence="1">
    <location>
        <begin position="127"/>
        <end position="132"/>
    </location>
    <ligand>
        <name>S-adenosyl-L-methionine</name>
        <dbReference type="ChEBI" id="CHEBI:59789"/>
    </ligand>
</feature>
<name>RLMH_STAAE</name>
<comment type="function">
    <text evidence="1">Specifically methylates the pseudouridine at position 1915 (m3Psi1915) in 23S rRNA.</text>
</comment>
<comment type="catalytic activity">
    <reaction evidence="1">
        <text>pseudouridine(1915) in 23S rRNA + S-adenosyl-L-methionine = N(3)-methylpseudouridine(1915) in 23S rRNA + S-adenosyl-L-homocysteine + H(+)</text>
        <dbReference type="Rhea" id="RHEA:42752"/>
        <dbReference type="Rhea" id="RHEA-COMP:10221"/>
        <dbReference type="Rhea" id="RHEA-COMP:10222"/>
        <dbReference type="ChEBI" id="CHEBI:15378"/>
        <dbReference type="ChEBI" id="CHEBI:57856"/>
        <dbReference type="ChEBI" id="CHEBI:59789"/>
        <dbReference type="ChEBI" id="CHEBI:65314"/>
        <dbReference type="ChEBI" id="CHEBI:74486"/>
        <dbReference type="EC" id="2.1.1.177"/>
    </reaction>
</comment>
<comment type="subunit">
    <text evidence="1">Homodimer.</text>
</comment>
<comment type="subcellular location">
    <subcellularLocation>
        <location evidence="1">Cytoplasm</location>
    </subcellularLocation>
</comment>
<comment type="similarity">
    <text evidence="1">Belongs to the RNA methyltransferase RlmH family.</text>
</comment>
<sequence>MKITILAVGKLKEKYWKQAIAEYEKRLGPYTKIDIIEVPDEKAPENMSDKEIEQVKEKEGQRILAKIKPQSTVITLEIQGKMLSSEGLAQELNQRMTQGQSDFVFVIGGSNGLHKDVLQRSNYALSFSKMTFPHQMMRVVLIEQVYRAFKIMRGEAYHK</sequence>
<evidence type="ECO:0000255" key="1">
    <source>
        <dbReference type="HAMAP-Rule" id="MF_00658"/>
    </source>
</evidence>
<organism>
    <name type="scientific">Staphylococcus aureus (strain Newman)</name>
    <dbReference type="NCBI Taxonomy" id="426430"/>
    <lineage>
        <taxon>Bacteria</taxon>
        <taxon>Bacillati</taxon>
        <taxon>Bacillota</taxon>
        <taxon>Bacilli</taxon>
        <taxon>Bacillales</taxon>
        <taxon>Staphylococcaceae</taxon>
        <taxon>Staphylococcus</taxon>
    </lineage>
</organism>
<protein>
    <recommendedName>
        <fullName evidence="1">Ribosomal RNA large subunit methyltransferase H</fullName>
        <ecNumber evidence="1">2.1.1.177</ecNumber>
    </recommendedName>
    <alternativeName>
        <fullName evidence="1">23S rRNA (pseudouridine1915-N3)-methyltransferase</fullName>
    </alternativeName>
    <alternativeName>
        <fullName evidence="1">23S rRNA m3Psi1915 methyltransferase</fullName>
    </alternativeName>
    <alternativeName>
        <fullName evidence="1">rRNA (pseudouridine-N3-)-methyltransferase RlmH</fullName>
    </alternativeName>
</protein>
<gene>
    <name evidence="1" type="primary">rlmH</name>
    <name type="ordered locus">NWMN_0023</name>
</gene>
<dbReference type="EC" id="2.1.1.177" evidence="1"/>
<dbReference type="EMBL" id="AP009351">
    <property type="protein sequence ID" value="BAF66295.1"/>
    <property type="molecule type" value="Genomic_DNA"/>
</dbReference>
<dbReference type="RefSeq" id="WP_000704775.1">
    <property type="nucleotide sequence ID" value="NZ_JBBIAE010000007.1"/>
</dbReference>
<dbReference type="SMR" id="A6QD63"/>
<dbReference type="GeneID" id="98344407"/>
<dbReference type="KEGG" id="sae:NWMN_0023"/>
<dbReference type="HOGENOM" id="CLU_100552_0_0_9"/>
<dbReference type="Proteomes" id="UP000006386">
    <property type="component" value="Chromosome"/>
</dbReference>
<dbReference type="GO" id="GO:0005737">
    <property type="term" value="C:cytoplasm"/>
    <property type="evidence" value="ECO:0007669"/>
    <property type="project" value="UniProtKB-SubCell"/>
</dbReference>
<dbReference type="GO" id="GO:0070038">
    <property type="term" value="F:rRNA (pseudouridine-N3-)-methyltransferase activity"/>
    <property type="evidence" value="ECO:0007669"/>
    <property type="project" value="UniProtKB-UniRule"/>
</dbReference>
<dbReference type="CDD" id="cd18081">
    <property type="entry name" value="RlmH-like"/>
    <property type="match status" value="1"/>
</dbReference>
<dbReference type="Gene3D" id="3.40.1280.10">
    <property type="match status" value="1"/>
</dbReference>
<dbReference type="HAMAP" id="MF_00658">
    <property type="entry name" value="23SrRNA_methyltr_H"/>
    <property type="match status" value="1"/>
</dbReference>
<dbReference type="InterPro" id="IPR029028">
    <property type="entry name" value="Alpha/beta_knot_MTases"/>
</dbReference>
<dbReference type="InterPro" id="IPR003742">
    <property type="entry name" value="RlmH-like"/>
</dbReference>
<dbReference type="InterPro" id="IPR029026">
    <property type="entry name" value="tRNA_m1G_MTases_N"/>
</dbReference>
<dbReference type="NCBIfam" id="NF000985">
    <property type="entry name" value="PRK00103.1-3"/>
    <property type="match status" value="1"/>
</dbReference>
<dbReference type="NCBIfam" id="NF000986">
    <property type="entry name" value="PRK00103.1-4"/>
    <property type="match status" value="1"/>
</dbReference>
<dbReference type="NCBIfam" id="TIGR00246">
    <property type="entry name" value="tRNA_RlmH_YbeA"/>
    <property type="match status" value="1"/>
</dbReference>
<dbReference type="PANTHER" id="PTHR33603">
    <property type="entry name" value="METHYLTRANSFERASE"/>
    <property type="match status" value="1"/>
</dbReference>
<dbReference type="PANTHER" id="PTHR33603:SF1">
    <property type="entry name" value="RIBOSOMAL RNA LARGE SUBUNIT METHYLTRANSFERASE H"/>
    <property type="match status" value="1"/>
</dbReference>
<dbReference type="Pfam" id="PF02590">
    <property type="entry name" value="SPOUT_MTase"/>
    <property type="match status" value="1"/>
</dbReference>
<dbReference type="PIRSF" id="PIRSF004505">
    <property type="entry name" value="MT_bac"/>
    <property type="match status" value="1"/>
</dbReference>
<dbReference type="SUPFAM" id="SSF75217">
    <property type="entry name" value="alpha/beta knot"/>
    <property type="match status" value="1"/>
</dbReference>
<proteinExistence type="inferred from homology"/>
<accession>A6QD63</accession>
<keyword id="KW-0963">Cytoplasm</keyword>
<keyword id="KW-0489">Methyltransferase</keyword>
<keyword id="KW-0698">rRNA processing</keyword>
<keyword id="KW-0949">S-adenosyl-L-methionine</keyword>
<keyword id="KW-0808">Transferase</keyword>
<reference key="1">
    <citation type="journal article" date="2008" name="J. Bacteriol.">
        <title>Genome sequence of Staphylococcus aureus strain Newman and comparative analysis of staphylococcal genomes: polymorphism and evolution of two major pathogenicity islands.</title>
        <authorList>
            <person name="Baba T."/>
            <person name="Bae T."/>
            <person name="Schneewind O."/>
            <person name="Takeuchi F."/>
            <person name="Hiramatsu K."/>
        </authorList>
    </citation>
    <scope>NUCLEOTIDE SEQUENCE [LARGE SCALE GENOMIC DNA]</scope>
    <source>
        <strain>Newman</strain>
    </source>
</reference>